<gene>
    <name evidence="1" type="primary">efp</name>
    <name type="ordered locus">Daud_1005</name>
</gene>
<accession>B1I3C0</accession>
<sequence>MISTNEFRTGLTVEVDGDPCQVIEFMHVKPGKGSPFVRAKLKNLRTGAIAERTFNAGEKLPRAILERKEMQYLYNDGANYYLMDNETYDQVGLSAGQLGDGVKYLKENMIINVVYHRGQVLGVDLPNTVELTVIETTPGIRGDTASGGSKPAVLETGVVLQVPLFVEEGDVIQVDTRSGAYIKRA</sequence>
<organism>
    <name type="scientific">Desulforudis audaxviator (strain MP104C)</name>
    <dbReference type="NCBI Taxonomy" id="477974"/>
    <lineage>
        <taxon>Bacteria</taxon>
        <taxon>Bacillati</taxon>
        <taxon>Bacillota</taxon>
        <taxon>Clostridia</taxon>
        <taxon>Thermoanaerobacterales</taxon>
        <taxon>Candidatus Desulforudaceae</taxon>
        <taxon>Candidatus Desulforudis</taxon>
    </lineage>
</organism>
<reference key="1">
    <citation type="submission" date="2007-10" db="EMBL/GenBank/DDBJ databases">
        <title>Complete sequence of chromosome of Desulforudis audaxviator MP104C.</title>
        <authorList>
            <person name="Copeland A."/>
            <person name="Lucas S."/>
            <person name="Lapidus A."/>
            <person name="Barry K."/>
            <person name="Glavina del Rio T."/>
            <person name="Dalin E."/>
            <person name="Tice H."/>
            <person name="Bruce D."/>
            <person name="Pitluck S."/>
            <person name="Lowry S.R."/>
            <person name="Larimer F."/>
            <person name="Land M.L."/>
            <person name="Hauser L."/>
            <person name="Kyrpides N."/>
            <person name="Ivanova N.N."/>
            <person name="Richardson P."/>
        </authorList>
    </citation>
    <scope>NUCLEOTIDE SEQUENCE [LARGE SCALE GENOMIC DNA]</scope>
    <source>
        <strain>MP104C</strain>
    </source>
</reference>
<protein>
    <recommendedName>
        <fullName evidence="1">Elongation factor P</fullName>
        <shortName evidence="1">EF-P</shortName>
    </recommendedName>
</protein>
<keyword id="KW-0963">Cytoplasm</keyword>
<keyword id="KW-0251">Elongation factor</keyword>
<keyword id="KW-0648">Protein biosynthesis</keyword>
<keyword id="KW-1185">Reference proteome</keyword>
<comment type="function">
    <text evidence="1">Involved in peptide bond synthesis. Stimulates efficient translation and peptide-bond synthesis on native or reconstituted 70S ribosomes in vitro. Probably functions indirectly by altering the affinity of the ribosome for aminoacyl-tRNA, thus increasing their reactivity as acceptors for peptidyl transferase.</text>
</comment>
<comment type="pathway">
    <text evidence="1">Protein biosynthesis; polypeptide chain elongation.</text>
</comment>
<comment type="subcellular location">
    <subcellularLocation>
        <location evidence="1">Cytoplasm</location>
    </subcellularLocation>
</comment>
<comment type="similarity">
    <text evidence="1">Belongs to the elongation factor P family.</text>
</comment>
<feature type="chain" id="PRO_1000096147" description="Elongation factor P">
    <location>
        <begin position="1"/>
        <end position="185"/>
    </location>
</feature>
<proteinExistence type="inferred from homology"/>
<evidence type="ECO:0000255" key="1">
    <source>
        <dbReference type="HAMAP-Rule" id="MF_00141"/>
    </source>
</evidence>
<name>EFP_DESAP</name>
<dbReference type="EMBL" id="CP000860">
    <property type="protein sequence ID" value="ACA59517.1"/>
    <property type="molecule type" value="Genomic_DNA"/>
</dbReference>
<dbReference type="RefSeq" id="WP_012302103.1">
    <property type="nucleotide sequence ID" value="NC_010424.1"/>
</dbReference>
<dbReference type="SMR" id="B1I3C0"/>
<dbReference type="STRING" id="477974.Daud_1005"/>
<dbReference type="KEGG" id="dau:Daud_1005"/>
<dbReference type="eggNOG" id="COG0231">
    <property type="taxonomic scope" value="Bacteria"/>
</dbReference>
<dbReference type="HOGENOM" id="CLU_074944_0_1_9"/>
<dbReference type="OrthoDB" id="9801844at2"/>
<dbReference type="UniPathway" id="UPA00345"/>
<dbReference type="Proteomes" id="UP000008544">
    <property type="component" value="Chromosome"/>
</dbReference>
<dbReference type="GO" id="GO:0005737">
    <property type="term" value="C:cytoplasm"/>
    <property type="evidence" value="ECO:0007669"/>
    <property type="project" value="UniProtKB-SubCell"/>
</dbReference>
<dbReference type="GO" id="GO:0003746">
    <property type="term" value="F:translation elongation factor activity"/>
    <property type="evidence" value="ECO:0007669"/>
    <property type="project" value="UniProtKB-UniRule"/>
</dbReference>
<dbReference type="GO" id="GO:0043043">
    <property type="term" value="P:peptide biosynthetic process"/>
    <property type="evidence" value="ECO:0007669"/>
    <property type="project" value="InterPro"/>
</dbReference>
<dbReference type="CDD" id="cd04470">
    <property type="entry name" value="S1_EF-P_repeat_1"/>
    <property type="match status" value="1"/>
</dbReference>
<dbReference type="CDD" id="cd05794">
    <property type="entry name" value="S1_EF-P_repeat_2"/>
    <property type="match status" value="1"/>
</dbReference>
<dbReference type="FunFam" id="2.30.30.30:FF:000003">
    <property type="entry name" value="Elongation factor P"/>
    <property type="match status" value="1"/>
</dbReference>
<dbReference type="FunFam" id="2.40.50.140:FF:000004">
    <property type="entry name" value="Elongation factor P"/>
    <property type="match status" value="1"/>
</dbReference>
<dbReference type="FunFam" id="2.40.50.140:FF:000009">
    <property type="entry name" value="Elongation factor P"/>
    <property type="match status" value="1"/>
</dbReference>
<dbReference type="Gene3D" id="2.30.30.30">
    <property type="match status" value="1"/>
</dbReference>
<dbReference type="Gene3D" id="2.40.50.140">
    <property type="entry name" value="Nucleic acid-binding proteins"/>
    <property type="match status" value="2"/>
</dbReference>
<dbReference type="HAMAP" id="MF_00141">
    <property type="entry name" value="EF_P"/>
    <property type="match status" value="1"/>
</dbReference>
<dbReference type="InterPro" id="IPR015365">
    <property type="entry name" value="Elong-fact-P_C"/>
</dbReference>
<dbReference type="InterPro" id="IPR012340">
    <property type="entry name" value="NA-bd_OB-fold"/>
</dbReference>
<dbReference type="InterPro" id="IPR014722">
    <property type="entry name" value="Rib_uL2_dom2"/>
</dbReference>
<dbReference type="InterPro" id="IPR020599">
    <property type="entry name" value="Transl_elong_fac_P/YeiP"/>
</dbReference>
<dbReference type="InterPro" id="IPR013185">
    <property type="entry name" value="Transl_elong_KOW-like"/>
</dbReference>
<dbReference type="InterPro" id="IPR001059">
    <property type="entry name" value="Transl_elong_P/YeiP_cen"/>
</dbReference>
<dbReference type="InterPro" id="IPR013852">
    <property type="entry name" value="Transl_elong_P/YeiP_CS"/>
</dbReference>
<dbReference type="InterPro" id="IPR011768">
    <property type="entry name" value="Transl_elongation_fac_P"/>
</dbReference>
<dbReference type="InterPro" id="IPR008991">
    <property type="entry name" value="Translation_prot_SH3-like_sf"/>
</dbReference>
<dbReference type="NCBIfam" id="TIGR00038">
    <property type="entry name" value="efp"/>
    <property type="match status" value="1"/>
</dbReference>
<dbReference type="NCBIfam" id="NF001810">
    <property type="entry name" value="PRK00529.1"/>
    <property type="match status" value="1"/>
</dbReference>
<dbReference type="PANTHER" id="PTHR30053">
    <property type="entry name" value="ELONGATION FACTOR P"/>
    <property type="match status" value="1"/>
</dbReference>
<dbReference type="PANTHER" id="PTHR30053:SF12">
    <property type="entry name" value="ELONGATION FACTOR P (EF-P) FAMILY PROTEIN"/>
    <property type="match status" value="1"/>
</dbReference>
<dbReference type="Pfam" id="PF01132">
    <property type="entry name" value="EFP"/>
    <property type="match status" value="1"/>
</dbReference>
<dbReference type="Pfam" id="PF08207">
    <property type="entry name" value="EFP_N"/>
    <property type="match status" value="1"/>
</dbReference>
<dbReference type="Pfam" id="PF09285">
    <property type="entry name" value="Elong-fact-P_C"/>
    <property type="match status" value="1"/>
</dbReference>
<dbReference type="PIRSF" id="PIRSF005901">
    <property type="entry name" value="EF-P"/>
    <property type="match status" value="1"/>
</dbReference>
<dbReference type="SMART" id="SM01185">
    <property type="entry name" value="EFP"/>
    <property type="match status" value="1"/>
</dbReference>
<dbReference type="SMART" id="SM00841">
    <property type="entry name" value="Elong-fact-P_C"/>
    <property type="match status" value="1"/>
</dbReference>
<dbReference type="SUPFAM" id="SSF50249">
    <property type="entry name" value="Nucleic acid-binding proteins"/>
    <property type="match status" value="2"/>
</dbReference>
<dbReference type="SUPFAM" id="SSF50104">
    <property type="entry name" value="Translation proteins SH3-like domain"/>
    <property type="match status" value="1"/>
</dbReference>
<dbReference type="PROSITE" id="PS01275">
    <property type="entry name" value="EFP"/>
    <property type="match status" value="1"/>
</dbReference>